<reference key="1">
    <citation type="journal article" date="2004" name="Mol. Phylogenet. Evol.">
        <title>Phylogeny of mysticete whales based on mitochondrial and nuclear data.</title>
        <authorList>
            <person name="Rychel A.L."/>
            <person name="Reeder T.W."/>
            <person name="Berta A."/>
        </authorList>
    </citation>
    <scope>NUCLEOTIDE SEQUENCE [GENOMIC DNA]</scope>
</reference>
<keyword id="KW-0249">Electron transport</keyword>
<keyword id="KW-0472">Membrane</keyword>
<keyword id="KW-0496">Mitochondrion</keyword>
<keyword id="KW-0999">Mitochondrion inner membrane</keyword>
<keyword id="KW-0520">NAD</keyword>
<keyword id="KW-1185">Reference proteome</keyword>
<keyword id="KW-0679">Respiratory chain</keyword>
<keyword id="KW-1278">Translocase</keyword>
<keyword id="KW-0812">Transmembrane</keyword>
<keyword id="KW-1133">Transmembrane helix</keyword>
<keyword id="KW-0813">Transport</keyword>
<keyword id="KW-0830">Ubiquinone</keyword>
<gene>
    <name type="primary">MT-ND4L</name>
    <name type="synonym">MTND4L</name>
    <name type="synonym">NADH4L</name>
    <name type="synonym">ND4L</name>
</gene>
<accession>Q69B76</accession>
<sequence length="98" mass="10784">MSLVHINILMAFIMSLTGLLMYRSHLMSALLCLEGMMLSLFVLATLTILNSHFTLANMMPIILLVFAACEAAIGLALLVMISNTYGTDYVQNLNLLQC</sequence>
<feature type="chain" id="PRO_0000118414" description="NADH-ubiquinone oxidoreductase chain 4L">
    <location>
        <begin position="1"/>
        <end position="98"/>
    </location>
</feature>
<feature type="transmembrane region" description="Helical" evidence="3">
    <location>
        <begin position="1"/>
        <end position="21"/>
    </location>
</feature>
<feature type="transmembrane region" description="Helical" evidence="3">
    <location>
        <begin position="29"/>
        <end position="49"/>
    </location>
</feature>
<feature type="transmembrane region" description="Helical" evidence="3">
    <location>
        <begin position="61"/>
        <end position="81"/>
    </location>
</feature>
<name>NU4LM_DELLE</name>
<proteinExistence type="inferred from homology"/>
<geneLocation type="mitochondrion"/>
<organism>
    <name type="scientific">Delphinapterus leucas</name>
    <name type="common">Beluga whale</name>
    <dbReference type="NCBI Taxonomy" id="9749"/>
    <lineage>
        <taxon>Eukaryota</taxon>
        <taxon>Metazoa</taxon>
        <taxon>Chordata</taxon>
        <taxon>Craniata</taxon>
        <taxon>Vertebrata</taxon>
        <taxon>Euteleostomi</taxon>
        <taxon>Mammalia</taxon>
        <taxon>Eutheria</taxon>
        <taxon>Laurasiatheria</taxon>
        <taxon>Artiodactyla</taxon>
        <taxon>Whippomorpha</taxon>
        <taxon>Cetacea</taxon>
        <taxon>Odontoceti</taxon>
        <taxon>Monodontidae</taxon>
        <taxon>Delphinapterus</taxon>
    </lineage>
</organism>
<evidence type="ECO:0000250" key="1">
    <source>
        <dbReference type="UniProtKB" id="P03901"/>
    </source>
</evidence>
<evidence type="ECO:0000250" key="2">
    <source>
        <dbReference type="UniProtKB" id="P03902"/>
    </source>
</evidence>
<evidence type="ECO:0000255" key="3"/>
<evidence type="ECO:0000305" key="4"/>
<comment type="function">
    <text evidence="1">Core subunit of the mitochondrial membrane respiratory chain NADH dehydrogenase (Complex I) which catalyzes electron transfer from NADH through the respiratory chain, using ubiquinone as an electron acceptor. Part of the enzyme membrane arm which is embedded in the lipid bilayer and involved in proton translocation.</text>
</comment>
<comment type="catalytic activity">
    <reaction evidence="1">
        <text>a ubiquinone + NADH + 5 H(+)(in) = a ubiquinol + NAD(+) + 4 H(+)(out)</text>
        <dbReference type="Rhea" id="RHEA:29091"/>
        <dbReference type="Rhea" id="RHEA-COMP:9565"/>
        <dbReference type="Rhea" id="RHEA-COMP:9566"/>
        <dbReference type="ChEBI" id="CHEBI:15378"/>
        <dbReference type="ChEBI" id="CHEBI:16389"/>
        <dbReference type="ChEBI" id="CHEBI:17976"/>
        <dbReference type="ChEBI" id="CHEBI:57540"/>
        <dbReference type="ChEBI" id="CHEBI:57945"/>
        <dbReference type="EC" id="7.1.1.2"/>
    </reaction>
    <physiologicalReaction direction="left-to-right" evidence="1">
        <dbReference type="Rhea" id="RHEA:29092"/>
    </physiologicalReaction>
</comment>
<comment type="subunit">
    <text evidence="2">Core subunit of respiratory chain NADH dehydrogenase (Complex I) which is composed of 45 different subunits.</text>
</comment>
<comment type="subcellular location">
    <subcellularLocation>
        <location evidence="2">Mitochondrion inner membrane</location>
        <topology evidence="3">Multi-pass membrane protein</topology>
    </subcellularLocation>
</comment>
<comment type="similarity">
    <text evidence="4">Belongs to the complex I subunit 4L family.</text>
</comment>
<protein>
    <recommendedName>
        <fullName>NADH-ubiquinone oxidoreductase chain 4L</fullName>
        <ecNumber>7.1.1.2</ecNumber>
    </recommendedName>
    <alternativeName>
        <fullName>NADH dehydrogenase subunit 4L</fullName>
    </alternativeName>
</protein>
<dbReference type="EC" id="7.1.1.2"/>
<dbReference type="EMBL" id="AY398628">
    <property type="protein sequence ID" value="AAR33063.1"/>
    <property type="molecule type" value="Genomic_DNA"/>
</dbReference>
<dbReference type="SMR" id="Q69B76"/>
<dbReference type="Proteomes" id="UP000248483">
    <property type="component" value="Mitochondrion MT"/>
</dbReference>
<dbReference type="GO" id="GO:0005743">
    <property type="term" value="C:mitochondrial inner membrane"/>
    <property type="evidence" value="ECO:0000250"/>
    <property type="project" value="UniProtKB"/>
</dbReference>
<dbReference type="GO" id="GO:0045271">
    <property type="term" value="C:respiratory chain complex I"/>
    <property type="evidence" value="ECO:0000250"/>
    <property type="project" value="UniProtKB"/>
</dbReference>
<dbReference type="GO" id="GO:0008137">
    <property type="term" value="F:NADH dehydrogenase (ubiquinone) activity"/>
    <property type="evidence" value="ECO:0000250"/>
    <property type="project" value="UniProtKB"/>
</dbReference>
<dbReference type="GO" id="GO:0042773">
    <property type="term" value="P:ATP synthesis coupled electron transport"/>
    <property type="evidence" value="ECO:0007669"/>
    <property type="project" value="InterPro"/>
</dbReference>
<dbReference type="FunFam" id="1.10.287.3510:FF:000002">
    <property type="entry name" value="NADH-ubiquinone oxidoreductase chain 4L"/>
    <property type="match status" value="1"/>
</dbReference>
<dbReference type="Gene3D" id="1.10.287.3510">
    <property type="match status" value="1"/>
</dbReference>
<dbReference type="InterPro" id="IPR001133">
    <property type="entry name" value="NADH_UbQ_OxRdtase_chain4L/K"/>
</dbReference>
<dbReference type="InterPro" id="IPR039428">
    <property type="entry name" value="NUOK/Mnh_C1-like"/>
</dbReference>
<dbReference type="PANTHER" id="PTHR11434:SF0">
    <property type="entry name" value="NADH-UBIQUINONE OXIDOREDUCTASE CHAIN 4L"/>
    <property type="match status" value="1"/>
</dbReference>
<dbReference type="PANTHER" id="PTHR11434">
    <property type="entry name" value="NADH-UBIQUINONE OXIDOREDUCTASE SUBUNIT ND4L"/>
    <property type="match status" value="1"/>
</dbReference>
<dbReference type="Pfam" id="PF00420">
    <property type="entry name" value="Oxidored_q2"/>
    <property type="match status" value="1"/>
</dbReference>